<keyword id="KW-0007">Acetylation</keyword>
<keyword id="KW-0249">Electron transport</keyword>
<keyword id="KW-0274">FAD</keyword>
<keyword id="KW-0285">Flavoprotein</keyword>
<keyword id="KW-0496">Mitochondrion</keyword>
<keyword id="KW-1185">Reference proteome</keyword>
<keyword id="KW-0813">Transport</keyword>
<dbReference type="EMBL" id="Z49133">
    <property type="protein sequence ID" value="CAA89000.1"/>
    <property type="molecule type" value="Genomic_DNA"/>
</dbReference>
<dbReference type="EMBL" id="Z72992">
    <property type="protein sequence ID" value="CAA97234.1"/>
    <property type="molecule type" value="Genomic_DNA"/>
</dbReference>
<dbReference type="EMBL" id="AY558378">
    <property type="protein sequence ID" value="AAS56704.1"/>
    <property type="molecule type" value="Genomic_DNA"/>
</dbReference>
<dbReference type="EMBL" id="BK006941">
    <property type="protein sequence ID" value="DAA08301.1"/>
    <property type="molecule type" value="Genomic_DNA"/>
</dbReference>
<dbReference type="PIR" id="S53930">
    <property type="entry name" value="S53930"/>
</dbReference>
<dbReference type="RefSeq" id="NP_011723.1">
    <property type="nucleotide sequence ID" value="NM_001181336.1"/>
</dbReference>
<dbReference type="SMR" id="P42940"/>
<dbReference type="BioGRID" id="33460">
    <property type="interactions" value="74"/>
</dbReference>
<dbReference type="DIP" id="DIP-3865N"/>
<dbReference type="FunCoup" id="P42940">
    <property type="interactions" value="599"/>
</dbReference>
<dbReference type="IntAct" id="P42940">
    <property type="interactions" value="30"/>
</dbReference>
<dbReference type="MINT" id="P42940"/>
<dbReference type="STRING" id="4932.YGR207C"/>
<dbReference type="iPTMnet" id="P42940"/>
<dbReference type="PaxDb" id="4932-YGR207C"/>
<dbReference type="PeptideAtlas" id="P42940"/>
<dbReference type="EnsemblFungi" id="YGR207C_mRNA">
    <property type="protein sequence ID" value="YGR207C"/>
    <property type="gene ID" value="YGR207C"/>
</dbReference>
<dbReference type="GeneID" id="853121"/>
<dbReference type="KEGG" id="sce:YGR207C"/>
<dbReference type="AGR" id="SGD:S000003439"/>
<dbReference type="SGD" id="S000003439">
    <property type="gene designation" value="CIR1"/>
</dbReference>
<dbReference type="VEuPathDB" id="FungiDB:YGR207C"/>
<dbReference type="eggNOG" id="KOG3180">
    <property type="taxonomic scope" value="Eukaryota"/>
</dbReference>
<dbReference type="GeneTree" id="ENSGT00390000009936"/>
<dbReference type="HOGENOM" id="CLU_060196_0_1_1"/>
<dbReference type="InParanoid" id="P42940"/>
<dbReference type="OMA" id="EINQPRI"/>
<dbReference type="OrthoDB" id="276685at2759"/>
<dbReference type="BioCyc" id="YEAST:G3O-30890-MONOMER"/>
<dbReference type="Reactome" id="R-SCE-611105">
    <property type="pathway name" value="Respiratory electron transport"/>
</dbReference>
<dbReference type="BioGRID-ORCS" id="853121">
    <property type="hits" value="0 hits in 10 CRISPR screens"/>
</dbReference>
<dbReference type="PRO" id="PR:P42940"/>
<dbReference type="Proteomes" id="UP000002311">
    <property type="component" value="Chromosome VII"/>
</dbReference>
<dbReference type="RNAct" id="P42940">
    <property type="molecule type" value="protein"/>
</dbReference>
<dbReference type="GO" id="GO:0005759">
    <property type="term" value="C:mitochondrial matrix"/>
    <property type="evidence" value="ECO:0007669"/>
    <property type="project" value="UniProtKB-SubCell"/>
</dbReference>
<dbReference type="GO" id="GO:0005739">
    <property type="term" value="C:mitochondrion"/>
    <property type="evidence" value="ECO:0007005"/>
    <property type="project" value="SGD"/>
</dbReference>
<dbReference type="GO" id="GO:0009055">
    <property type="term" value="F:electron transfer activity"/>
    <property type="evidence" value="ECO:0000318"/>
    <property type="project" value="GO_Central"/>
</dbReference>
<dbReference type="GO" id="GO:0033539">
    <property type="term" value="P:fatty acid beta-oxidation using acyl-CoA dehydrogenase"/>
    <property type="evidence" value="ECO:0000318"/>
    <property type="project" value="GO_Central"/>
</dbReference>
<dbReference type="CDD" id="cd01714">
    <property type="entry name" value="ETF_beta"/>
    <property type="match status" value="1"/>
</dbReference>
<dbReference type="FunFam" id="3.40.50.620:FF:000011">
    <property type="entry name" value="Electron transfer flavoprotein subunit beta"/>
    <property type="match status" value="1"/>
</dbReference>
<dbReference type="Gene3D" id="3.40.50.620">
    <property type="entry name" value="HUPs"/>
    <property type="match status" value="1"/>
</dbReference>
<dbReference type="InterPro" id="IPR000049">
    <property type="entry name" value="ET-Flavoprotein_bsu_CS"/>
</dbReference>
<dbReference type="InterPro" id="IPR014730">
    <property type="entry name" value="ETF_a/b_N"/>
</dbReference>
<dbReference type="InterPro" id="IPR012255">
    <property type="entry name" value="ETF_b"/>
</dbReference>
<dbReference type="InterPro" id="IPR033948">
    <property type="entry name" value="ETF_beta_N"/>
</dbReference>
<dbReference type="InterPro" id="IPR014729">
    <property type="entry name" value="Rossmann-like_a/b/a_fold"/>
</dbReference>
<dbReference type="PANTHER" id="PTHR21294">
    <property type="entry name" value="ELECTRON TRANSFER FLAVOPROTEIN BETA-SUBUNIT"/>
    <property type="match status" value="1"/>
</dbReference>
<dbReference type="PANTHER" id="PTHR21294:SF8">
    <property type="entry name" value="ELECTRON TRANSFER FLAVOPROTEIN SUBUNIT BETA"/>
    <property type="match status" value="1"/>
</dbReference>
<dbReference type="Pfam" id="PF01012">
    <property type="entry name" value="ETF"/>
    <property type="match status" value="1"/>
</dbReference>
<dbReference type="PIRSF" id="PIRSF000090">
    <property type="entry name" value="Beta-ETF"/>
    <property type="match status" value="1"/>
</dbReference>
<dbReference type="SMART" id="SM00893">
    <property type="entry name" value="ETF"/>
    <property type="match status" value="1"/>
</dbReference>
<dbReference type="SUPFAM" id="SSF52402">
    <property type="entry name" value="Adenine nucleotide alpha hydrolases-like"/>
    <property type="match status" value="1"/>
</dbReference>
<dbReference type="PROSITE" id="PS01065">
    <property type="entry name" value="ETF_BETA"/>
    <property type="match status" value="1"/>
</dbReference>
<reference key="1">
    <citation type="journal article" date="1996" name="Yeast">
        <title>Sequencing of a 17.6 kb segment on the right arm of yeast chromosome VII reveals 12 ORFs, including CCT, ADE3 and TR-I genes, homologues of the yeast PMT and EF1G genes, of the human and bacterial electron-transferring flavoproteins (beta-chain) and of the Escherichia coli phosphoserine phosphohydrolase, and five new ORFs.</title>
        <authorList>
            <person name="Guerreiro P."/>
            <person name="Barreiros T."/>
            <person name="Soares H."/>
            <person name="Cyrne L."/>
            <person name="Maia e Silva A."/>
            <person name="Rodrigues-Pousada C."/>
        </authorList>
    </citation>
    <scope>NUCLEOTIDE SEQUENCE [GENOMIC DNA]</scope>
    <source>
        <strain>ATCC 204508 / S288c</strain>
    </source>
</reference>
<reference key="2">
    <citation type="journal article" date="1997" name="Nature">
        <title>The nucleotide sequence of Saccharomyces cerevisiae chromosome VII.</title>
        <authorList>
            <person name="Tettelin H."/>
            <person name="Agostoni-Carbone M.L."/>
            <person name="Albermann K."/>
            <person name="Albers M."/>
            <person name="Arroyo J."/>
            <person name="Backes U."/>
            <person name="Barreiros T."/>
            <person name="Bertani I."/>
            <person name="Bjourson A.J."/>
            <person name="Brueckner M."/>
            <person name="Bruschi C.V."/>
            <person name="Carignani G."/>
            <person name="Castagnoli L."/>
            <person name="Cerdan E."/>
            <person name="Clemente M.L."/>
            <person name="Coblenz A."/>
            <person name="Coglievina M."/>
            <person name="Coissac E."/>
            <person name="Defoor E."/>
            <person name="Del Bino S."/>
            <person name="Delius H."/>
            <person name="Delneri D."/>
            <person name="de Wergifosse P."/>
            <person name="Dujon B."/>
            <person name="Durand P."/>
            <person name="Entian K.-D."/>
            <person name="Eraso P."/>
            <person name="Escribano V."/>
            <person name="Fabiani L."/>
            <person name="Fartmann B."/>
            <person name="Feroli F."/>
            <person name="Feuermann M."/>
            <person name="Frontali L."/>
            <person name="Garcia-Gonzalez M."/>
            <person name="Garcia-Saez M.I."/>
            <person name="Goffeau A."/>
            <person name="Guerreiro P."/>
            <person name="Hani J."/>
            <person name="Hansen M."/>
            <person name="Hebling U."/>
            <person name="Hernandez K."/>
            <person name="Heumann K."/>
            <person name="Hilger F."/>
            <person name="Hofmann B."/>
            <person name="Indge K.J."/>
            <person name="James C.M."/>
            <person name="Klima R."/>
            <person name="Koetter P."/>
            <person name="Kramer B."/>
            <person name="Kramer W."/>
            <person name="Lauquin G."/>
            <person name="Leuther H."/>
            <person name="Louis E.J."/>
            <person name="Maillier E."/>
            <person name="Marconi A."/>
            <person name="Martegani E."/>
            <person name="Mazon M.J."/>
            <person name="Mazzoni C."/>
            <person name="McReynolds A.D.K."/>
            <person name="Melchioretto P."/>
            <person name="Mewes H.-W."/>
            <person name="Minenkova O."/>
            <person name="Mueller-Auer S."/>
            <person name="Nawrocki A."/>
            <person name="Netter P."/>
            <person name="Neu R."/>
            <person name="Nombela C."/>
            <person name="Oliver S.G."/>
            <person name="Panzeri L."/>
            <person name="Paoluzi S."/>
            <person name="Plevani P."/>
            <person name="Portetelle D."/>
            <person name="Portillo F."/>
            <person name="Potier S."/>
            <person name="Purnelle B."/>
            <person name="Rieger M."/>
            <person name="Riles L."/>
            <person name="Rinaldi T."/>
            <person name="Robben J."/>
            <person name="Rodrigues-Pousada C."/>
            <person name="Rodriguez-Belmonte E."/>
            <person name="Rodriguez-Torres A.M."/>
            <person name="Rose M."/>
            <person name="Ruzzi M."/>
            <person name="Saliola M."/>
            <person name="Sanchez-Perez M."/>
            <person name="Schaefer B."/>
            <person name="Schaefer M."/>
            <person name="Scharfe M."/>
            <person name="Schmidheini T."/>
            <person name="Schreer A."/>
            <person name="Skala J."/>
            <person name="Souciet J.-L."/>
            <person name="Steensma H.Y."/>
            <person name="Talla E."/>
            <person name="Thierry A."/>
            <person name="Vandenbol M."/>
            <person name="van der Aart Q.J.M."/>
            <person name="Van Dyck L."/>
            <person name="Vanoni M."/>
            <person name="Verhasselt P."/>
            <person name="Voet M."/>
            <person name="Volckaert G."/>
            <person name="Wambutt R."/>
            <person name="Watson M.D."/>
            <person name="Weber N."/>
            <person name="Wedler E."/>
            <person name="Wedler H."/>
            <person name="Wipfli P."/>
            <person name="Wolf K."/>
            <person name="Wright L.F."/>
            <person name="Zaccaria P."/>
            <person name="Zimmermann M."/>
            <person name="Zollner A."/>
            <person name="Kleine K."/>
        </authorList>
    </citation>
    <scope>NUCLEOTIDE SEQUENCE [LARGE SCALE GENOMIC DNA]</scope>
    <source>
        <strain>ATCC 204508 / S288c</strain>
    </source>
</reference>
<reference key="3">
    <citation type="journal article" date="2014" name="G3 (Bethesda)">
        <title>The reference genome sequence of Saccharomyces cerevisiae: Then and now.</title>
        <authorList>
            <person name="Engel S.R."/>
            <person name="Dietrich F.S."/>
            <person name="Fisk D.G."/>
            <person name="Binkley G."/>
            <person name="Balakrishnan R."/>
            <person name="Costanzo M.C."/>
            <person name="Dwight S.S."/>
            <person name="Hitz B.C."/>
            <person name="Karra K."/>
            <person name="Nash R.S."/>
            <person name="Weng S."/>
            <person name="Wong E.D."/>
            <person name="Lloyd P."/>
            <person name="Skrzypek M.S."/>
            <person name="Miyasato S.R."/>
            <person name="Simison M."/>
            <person name="Cherry J.M."/>
        </authorList>
    </citation>
    <scope>GENOME REANNOTATION</scope>
    <source>
        <strain>ATCC 204508 / S288c</strain>
    </source>
</reference>
<reference key="4">
    <citation type="journal article" date="2007" name="Genome Res.">
        <title>Approaching a complete repository of sequence-verified protein-encoding clones for Saccharomyces cerevisiae.</title>
        <authorList>
            <person name="Hu Y."/>
            <person name="Rolfs A."/>
            <person name="Bhullar B."/>
            <person name="Murthy T.V.S."/>
            <person name="Zhu C."/>
            <person name="Berger M.F."/>
            <person name="Camargo A.A."/>
            <person name="Kelley F."/>
            <person name="McCarron S."/>
            <person name="Jepson D."/>
            <person name="Richardson A."/>
            <person name="Raphael J."/>
            <person name="Moreira D."/>
            <person name="Taycher E."/>
            <person name="Zuo D."/>
            <person name="Mohr S."/>
            <person name="Kane M.F."/>
            <person name="Williamson J."/>
            <person name="Simpson A.J.G."/>
            <person name="Bulyk M.L."/>
            <person name="Harlow E."/>
            <person name="Marsischky G."/>
            <person name="Kolodner R.D."/>
            <person name="LaBaer J."/>
        </authorList>
    </citation>
    <scope>NUCLEOTIDE SEQUENCE [GENOMIC DNA]</scope>
    <source>
        <strain>ATCC 204508 / S288c</strain>
    </source>
</reference>
<reference key="5">
    <citation type="journal article" date="2003" name="Nature">
        <title>Global analysis of protein localization in budding yeast.</title>
        <authorList>
            <person name="Huh W.-K."/>
            <person name="Falvo J.V."/>
            <person name="Gerke L.C."/>
            <person name="Carroll A.S."/>
            <person name="Howson R.W."/>
            <person name="Weissman J.S."/>
            <person name="O'Shea E.K."/>
        </authorList>
    </citation>
    <scope>SUBCELLULAR LOCATION [LARGE SCALE ANALYSIS]</scope>
</reference>
<reference key="6">
    <citation type="journal article" date="2003" name="Nature">
        <title>Global analysis of protein expression in yeast.</title>
        <authorList>
            <person name="Ghaemmaghami S."/>
            <person name="Huh W.-K."/>
            <person name="Bower K."/>
            <person name="Howson R.W."/>
            <person name="Belle A."/>
            <person name="Dephoure N."/>
            <person name="O'Shea E.K."/>
            <person name="Weissman J.S."/>
        </authorList>
    </citation>
    <scope>LEVEL OF PROTEIN EXPRESSION [LARGE SCALE ANALYSIS]</scope>
</reference>
<reference key="7">
    <citation type="journal article" date="2005" name="Hum. Mol. Genet.">
        <title>Frataxin interacts functionally with mitochondrial electron transport chain proteins.</title>
        <authorList>
            <person name="Gonzalez-Cabo P."/>
            <person name="Vazquez-Manrique R.P."/>
            <person name="Garcia-Gimeno M.A."/>
            <person name="Sanz P."/>
            <person name="Palau F."/>
        </authorList>
    </citation>
    <scope>INTERACTION WITH YHF1</scope>
</reference>
<reference key="8">
    <citation type="journal article" date="2010" name="Open Microbiol. J.">
        <title>The Saccharomyces cerevisiae genes, AIM45, YGR207c/CIR1 and YOR356w/CIR2, are involved in cellular redox state under stress conditions.</title>
        <authorList>
            <person name="Lopes J."/>
            <person name="Pinto M.J."/>
            <person name="Rodrigues A."/>
            <person name="Vasconcelos F."/>
            <person name="Oliveira R."/>
        </authorList>
    </citation>
    <scope>DISRUPTION PHENOTYPE</scope>
</reference>
<reference key="9">
    <citation type="journal article" date="2012" name="Proc. Natl. Acad. Sci. U.S.A.">
        <title>N-terminal acetylome analyses and functional insights of the N-terminal acetyltransferase NatB.</title>
        <authorList>
            <person name="Van Damme P."/>
            <person name="Lasa M."/>
            <person name="Polevoda B."/>
            <person name="Gazquez C."/>
            <person name="Elosegui-Artola A."/>
            <person name="Kim D.S."/>
            <person name="De Juan-Pardo E."/>
            <person name="Demeyer K."/>
            <person name="Hole K."/>
            <person name="Larrea E."/>
            <person name="Timmerman E."/>
            <person name="Prieto J."/>
            <person name="Arnesen T."/>
            <person name="Sherman F."/>
            <person name="Gevaert K."/>
            <person name="Aldabe R."/>
        </authorList>
    </citation>
    <scope>ACETYLATION [LARGE SCALE ANALYSIS] AT SER-2</scope>
    <scope>CLEAVAGE OF INITIATOR METHIONINE [LARGE SCALE ANALYSIS]</scope>
    <scope>IDENTIFICATION BY MASS SPECTROMETRY [LARGE SCALE ANALYSIS]</scope>
</reference>
<evidence type="ECO:0000250" key="1"/>
<evidence type="ECO:0000269" key="2">
    <source>
    </source>
</evidence>
<evidence type="ECO:0000269" key="3">
    <source>
    </source>
</evidence>
<evidence type="ECO:0000269" key="4">
    <source>
    </source>
</evidence>
<evidence type="ECO:0000269" key="5">
    <source>
    </source>
</evidence>
<evidence type="ECO:0000305" key="6"/>
<evidence type="ECO:0007744" key="7">
    <source>
    </source>
</evidence>
<organism>
    <name type="scientific">Saccharomyces cerevisiae (strain ATCC 204508 / S288c)</name>
    <name type="common">Baker's yeast</name>
    <dbReference type="NCBI Taxonomy" id="559292"/>
    <lineage>
        <taxon>Eukaryota</taxon>
        <taxon>Fungi</taxon>
        <taxon>Dikarya</taxon>
        <taxon>Ascomycota</taxon>
        <taxon>Saccharomycotina</taxon>
        <taxon>Saccharomycetes</taxon>
        <taxon>Saccharomycetales</taxon>
        <taxon>Saccharomycetaceae</taxon>
        <taxon>Saccharomyces</taxon>
    </lineage>
</organism>
<protein>
    <recommendedName>
        <fullName>Probable electron transfer flavoprotein subunit beta</fullName>
        <shortName>Beta-ETF</shortName>
    </recommendedName>
    <alternativeName>
        <fullName>Changed intracellular redox state protein 1</fullName>
    </alternativeName>
</protein>
<proteinExistence type="evidence at protein level"/>
<name>ETFB_YEAST</name>
<gene>
    <name type="primary">CIR1</name>
    <name type="ordered locus">YGR207C</name>
    <name type="ORF">G7742</name>
</gene>
<accession>P42940</accession>
<accession>D6VUZ0</accession>
<feature type="initiator methionine" description="Removed" evidence="7">
    <location>
        <position position="1"/>
    </location>
</feature>
<feature type="chain" id="PRO_0000167874" description="Probable electron transfer flavoprotein subunit beta">
    <location>
        <begin position="2"/>
        <end position="261"/>
    </location>
</feature>
<feature type="modified residue" description="N-acetylserine" evidence="7">
    <location>
        <position position="2"/>
    </location>
</feature>
<comment type="function">
    <text evidence="1">The electron transfer flavoprotein serves as a specific electron acceptor for several dehydrogenases, including five acyl-CoA dehydrogenases, glutaryl-CoA and sarcosine dehydrogenase. It transfers the electrons to the main mitochondrial respiratory chain via ETF-ubiquinone oxidoreductase (ETF dehydrogenase) (By similarity).</text>
</comment>
<comment type="cofactor">
    <cofactor evidence="1">
        <name>FAD</name>
        <dbReference type="ChEBI" id="CHEBI:57692"/>
    </cofactor>
    <text evidence="1">Binds 1 FAD per dimer.</text>
</comment>
<comment type="cofactor">
    <cofactor evidence="1">
        <name>AMP</name>
        <dbReference type="ChEBI" id="CHEBI:456215"/>
    </cofactor>
    <text evidence="1">Binds 1 AMP per subunit.</text>
</comment>
<comment type="subunit">
    <text evidence="1 4">Heterodimer of an alpha and a beta subunit (By similarity). Interacts with YFH1.</text>
</comment>
<comment type="subcellular location">
    <subcellularLocation>
        <location evidence="2">Mitochondrion matrix</location>
    </subcellularLocation>
</comment>
<comment type="disruption phenotype">
    <text evidence="5">Displays higher growth rate and higher sensitivity to superoxide and heat stress, on nonfermentable carbon sources. Leads to decreased intracellular oxidation upon heat shock. Under conditions of mitochondrial perturbation by antimycin A, displays increased peroxisomal proliferation.</text>
</comment>
<comment type="miscellaneous">
    <text evidence="3">Present with 2400 molecules/cell in log phase SD medium.</text>
</comment>
<comment type="similarity">
    <text evidence="6">Belongs to the ETF beta-subunit/FixA family.</text>
</comment>
<sequence>MSAKQQLRILVPVKRVVDFQIKPRVNKTLTGIETSGIKFSINPFDDIAVEEAIRIKEKNKSLVESTHAVSIGSAKAQDILRNCLAKGIDTCSLIDSVGKENIEPLAIAKILKAVVEKKGSNLVLMGKQAIDDDCNNTGQMLAGLLNWPQATNAAKVEFLDNGRVQVTREIDDGEEVIEASLPMVITTDLRLNTPRYVGLPKLMKAKKKPIEKLDIAKDFPEINIEPQLKIVSMEEPKTKSPGVKLNSVDELIEKLKEVKAI</sequence>